<accession>A4QAA5</accession>
<proteinExistence type="inferred from homology"/>
<organism>
    <name type="scientific">Corynebacterium glutamicum (strain R)</name>
    <dbReference type="NCBI Taxonomy" id="340322"/>
    <lineage>
        <taxon>Bacteria</taxon>
        <taxon>Bacillati</taxon>
        <taxon>Actinomycetota</taxon>
        <taxon>Actinomycetes</taxon>
        <taxon>Mycobacteriales</taxon>
        <taxon>Corynebacteriaceae</taxon>
        <taxon>Corynebacterium</taxon>
    </lineage>
</organism>
<evidence type="ECO:0000255" key="1">
    <source>
        <dbReference type="HAMAP-Rule" id="MF_00158"/>
    </source>
</evidence>
<keyword id="KW-0067">ATP-binding</keyword>
<keyword id="KW-0963">Cytoplasm</keyword>
<keyword id="KW-0436">Ligase</keyword>
<keyword id="KW-0547">Nucleotide-binding</keyword>
<keyword id="KW-0566">Pantothenate biosynthesis</keyword>
<name>PANC_CORGB</name>
<feature type="chain" id="PRO_0000305430" description="Pantothenate synthetase">
    <location>
        <begin position="1"/>
        <end position="279"/>
    </location>
</feature>
<feature type="active site" description="Proton donor" evidence="1">
    <location>
        <position position="33"/>
    </location>
</feature>
<feature type="binding site" evidence="1">
    <location>
        <begin position="26"/>
        <end position="33"/>
    </location>
    <ligand>
        <name>ATP</name>
        <dbReference type="ChEBI" id="CHEBI:30616"/>
    </ligand>
</feature>
<feature type="binding site" evidence="1">
    <location>
        <position position="57"/>
    </location>
    <ligand>
        <name>(R)-pantoate</name>
        <dbReference type="ChEBI" id="CHEBI:15980"/>
    </ligand>
</feature>
<feature type="binding site" evidence="1">
    <location>
        <position position="57"/>
    </location>
    <ligand>
        <name>beta-alanine</name>
        <dbReference type="ChEBI" id="CHEBI:57966"/>
    </ligand>
</feature>
<feature type="binding site" evidence="1">
    <location>
        <begin position="147"/>
        <end position="150"/>
    </location>
    <ligand>
        <name>ATP</name>
        <dbReference type="ChEBI" id="CHEBI:30616"/>
    </ligand>
</feature>
<feature type="binding site" evidence="1">
    <location>
        <position position="153"/>
    </location>
    <ligand>
        <name>(R)-pantoate</name>
        <dbReference type="ChEBI" id="CHEBI:15980"/>
    </ligand>
</feature>
<feature type="binding site" evidence="1">
    <location>
        <position position="176"/>
    </location>
    <ligand>
        <name>ATP</name>
        <dbReference type="ChEBI" id="CHEBI:30616"/>
    </ligand>
</feature>
<feature type="binding site" evidence="1">
    <location>
        <begin position="184"/>
        <end position="187"/>
    </location>
    <ligand>
        <name>ATP</name>
        <dbReference type="ChEBI" id="CHEBI:30616"/>
    </ligand>
</feature>
<dbReference type="EC" id="6.3.2.1" evidence="1"/>
<dbReference type="EMBL" id="AP009044">
    <property type="protein sequence ID" value="BAF53152.1"/>
    <property type="molecule type" value="Genomic_DNA"/>
</dbReference>
<dbReference type="RefSeq" id="WP_003857225.1">
    <property type="nucleotide sequence ID" value="NC_009342.1"/>
</dbReference>
<dbReference type="SMR" id="A4QAA5"/>
<dbReference type="KEGG" id="cgt:cgR_0189"/>
<dbReference type="HOGENOM" id="CLU_047148_0_2_11"/>
<dbReference type="PhylomeDB" id="A4QAA5"/>
<dbReference type="UniPathway" id="UPA00028">
    <property type="reaction ID" value="UER00005"/>
</dbReference>
<dbReference type="Proteomes" id="UP000006698">
    <property type="component" value="Chromosome"/>
</dbReference>
<dbReference type="GO" id="GO:0005829">
    <property type="term" value="C:cytosol"/>
    <property type="evidence" value="ECO:0007669"/>
    <property type="project" value="TreeGrafter"/>
</dbReference>
<dbReference type="GO" id="GO:0005524">
    <property type="term" value="F:ATP binding"/>
    <property type="evidence" value="ECO:0007669"/>
    <property type="project" value="UniProtKB-KW"/>
</dbReference>
<dbReference type="GO" id="GO:0004592">
    <property type="term" value="F:pantoate-beta-alanine ligase activity"/>
    <property type="evidence" value="ECO:0007669"/>
    <property type="project" value="UniProtKB-UniRule"/>
</dbReference>
<dbReference type="GO" id="GO:0015940">
    <property type="term" value="P:pantothenate biosynthetic process"/>
    <property type="evidence" value="ECO:0007669"/>
    <property type="project" value="UniProtKB-UniRule"/>
</dbReference>
<dbReference type="CDD" id="cd00560">
    <property type="entry name" value="PanC"/>
    <property type="match status" value="1"/>
</dbReference>
<dbReference type="FunFam" id="3.40.50.620:FF:000114">
    <property type="entry name" value="Pantothenate synthetase"/>
    <property type="match status" value="1"/>
</dbReference>
<dbReference type="Gene3D" id="3.40.50.620">
    <property type="entry name" value="HUPs"/>
    <property type="match status" value="1"/>
</dbReference>
<dbReference type="Gene3D" id="3.30.1300.10">
    <property type="entry name" value="Pantoate-beta-alanine ligase, C-terminal domain"/>
    <property type="match status" value="1"/>
</dbReference>
<dbReference type="HAMAP" id="MF_00158">
    <property type="entry name" value="PanC"/>
    <property type="match status" value="1"/>
</dbReference>
<dbReference type="InterPro" id="IPR003721">
    <property type="entry name" value="Pantoate_ligase"/>
</dbReference>
<dbReference type="InterPro" id="IPR042176">
    <property type="entry name" value="Pantoate_ligase_C"/>
</dbReference>
<dbReference type="InterPro" id="IPR014729">
    <property type="entry name" value="Rossmann-like_a/b/a_fold"/>
</dbReference>
<dbReference type="NCBIfam" id="TIGR00018">
    <property type="entry name" value="panC"/>
    <property type="match status" value="1"/>
</dbReference>
<dbReference type="PANTHER" id="PTHR21299">
    <property type="entry name" value="CYTIDYLATE KINASE/PANTOATE-BETA-ALANINE LIGASE"/>
    <property type="match status" value="1"/>
</dbReference>
<dbReference type="PANTHER" id="PTHR21299:SF1">
    <property type="entry name" value="PANTOATE--BETA-ALANINE LIGASE"/>
    <property type="match status" value="1"/>
</dbReference>
<dbReference type="Pfam" id="PF02569">
    <property type="entry name" value="Pantoate_ligase"/>
    <property type="match status" value="1"/>
</dbReference>
<dbReference type="SUPFAM" id="SSF52374">
    <property type="entry name" value="Nucleotidylyl transferase"/>
    <property type="match status" value="1"/>
</dbReference>
<sequence length="279" mass="29932">MQVATTKKALIDALLHHKSVGLVPTMGALHSGHASLVKAARAENDTVVASIFVNPLQFEALGDCDDYRNYPRQLDADLALLEEAGVDIVFAPDVEEMYPGGLPLVWARTGSIGTKLEGASRPGHFDGVATVVAKLFNLVRPDRAYFGQKDAQQVAVIRRLVADLDIPVEIRPVPIIRSADGLAESSRNQRLSADQRAQALVLPQVLSGLQRRKAAGEALDIQGARDTLASADGVRLDHLEIVDPATLEPLEIDGLLTQPALVVAAIFVGPVRLIDNIEL</sequence>
<comment type="function">
    <text evidence="1">Catalyzes the condensation of pantoate with beta-alanine in an ATP-dependent reaction via a pantoyl-adenylate intermediate.</text>
</comment>
<comment type="catalytic activity">
    <reaction evidence="1">
        <text>(R)-pantoate + beta-alanine + ATP = (R)-pantothenate + AMP + diphosphate + H(+)</text>
        <dbReference type="Rhea" id="RHEA:10912"/>
        <dbReference type="ChEBI" id="CHEBI:15378"/>
        <dbReference type="ChEBI" id="CHEBI:15980"/>
        <dbReference type="ChEBI" id="CHEBI:29032"/>
        <dbReference type="ChEBI" id="CHEBI:30616"/>
        <dbReference type="ChEBI" id="CHEBI:33019"/>
        <dbReference type="ChEBI" id="CHEBI:57966"/>
        <dbReference type="ChEBI" id="CHEBI:456215"/>
        <dbReference type="EC" id="6.3.2.1"/>
    </reaction>
</comment>
<comment type="pathway">
    <text evidence="1">Cofactor biosynthesis; (R)-pantothenate biosynthesis; (R)-pantothenate from (R)-pantoate and beta-alanine: step 1/1.</text>
</comment>
<comment type="subunit">
    <text evidence="1">Homodimer.</text>
</comment>
<comment type="subcellular location">
    <subcellularLocation>
        <location evidence="1">Cytoplasm</location>
    </subcellularLocation>
</comment>
<comment type="miscellaneous">
    <text evidence="1">The reaction proceeds by a bi uni uni bi ping pong mechanism.</text>
</comment>
<comment type="similarity">
    <text evidence="1">Belongs to the pantothenate synthetase family.</text>
</comment>
<gene>
    <name evidence="1" type="primary">panC</name>
    <name type="ordered locus">cgR_0189</name>
</gene>
<protein>
    <recommendedName>
        <fullName evidence="1">Pantothenate synthetase</fullName>
        <shortName evidence="1">PS</shortName>
        <ecNumber evidence="1">6.3.2.1</ecNumber>
    </recommendedName>
    <alternativeName>
        <fullName evidence="1">Pantoate--beta-alanine ligase</fullName>
    </alternativeName>
    <alternativeName>
        <fullName evidence="1">Pantoate-activating enzyme</fullName>
    </alternativeName>
</protein>
<reference key="1">
    <citation type="journal article" date="2007" name="Microbiology">
        <title>Comparative analysis of the Corynebacterium glutamicum group and complete genome sequence of strain R.</title>
        <authorList>
            <person name="Yukawa H."/>
            <person name="Omumasaba C.A."/>
            <person name="Nonaka H."/>
            <person name="Kos P."/>
            <person name="Okai N."/>
            <person name="Suzuki N."/>
            <person name="Suda M."/>
            <person name="Tsuge Y."/>
            <person name="Watanabe J."/>
            <person name="Ikeda Y."/>
            <person name="Vertes A.A."/>
            <person name="Inui M."/>
        </authorList>
    </citation>
    <scope>NUCLEOTIDE SEQUENCE [LARGE SCALE GENOMIC DNA]</scope>
    <source>
        <strain>R</strain>
    </source>
</reference>